<gene>
    <name evidence="1" type="primary">purC</name>
    <name type="ordered locus">lpp1647</name>
</gene>
<protein>
    <recommendedName>
        <fullName evidence="1">Phosphoribosylaminoimidazole-succinocarboxamide synthase</fullName>
        <ecNumber evidence="1">6.3.2.6</ecNumber>
    </recommendedName>
    <alternativeName>
        <fullName evidence="1">SAICAR synthetase</fullName>
    </alternativeName>
</protein>
<dbReference type="EC" id="6.3.2.6" evidence="1"/>
<dbReference type="EMBL" id="CR628336">
    <property type="protein sequence ID" value="CAH12799.1"/>
    <property type="molecule type" value="Genomic_DNA"/>
</dbReference>
<dbReference type="SMR" id="Q5X4M9"/>
<dbReference type="KEGG" id="lpp:lpp1647"/>
<dbReference type="LegioList" id="lpp1647"/>
<dbReference type="HOGENOM" id="CLU_045637_0_1_6"/>
<dbReference type="UniPathway" id="UPA00074">
    <property type="reaction ID" value="UER00131"/>
</dbReference>
<dbReference type="GO" id="GO:0005737">
    <property type="term" value="C:cytoplasm"/>
    <property type="evidence" value="ECO:0007669"/>
    <property type="project" value="TreeGrafter"/>
</dbReference>
<dbReference type="GO" id="GO:0005524">
    <property type="term" value="F:ATP binding"/>
    <property type="evidence" value="ECO:0007669"/>
    <property type="project" value="UniProtKB-KW"/>
</dbReference>
<dbReference type="GO" id="GO:0004639">
    <property type="term" value="F:phosphoribosylaminoimidazolesuccinocarboxamide synthase activity"/>
    <property type="evidence" value="ECO:0007669"/>
    <property type="project" value="UniProtKB-UniRule"/>
</dbReference>
<dbReference type="GO" id="GO:0006189">
    <property type="term" value="P:'de novo' IMP biosynthetic process"/>
    <property type="evidence" value="ECO:0007669"/>
    <property type="project" value="UniProtKB-UniRule"/>
</dbReference>
<dbReference type="CDD" id="cd01414">
    <property type="entry name" value="SAICAR_synt_Sc"/>
    <property type="match status" value="1"/>
</dbReference>
<dbReference type="FunFam" id="3.30.200.20:FF:000199">
    <property type="entry name" value="Phosphoribosylaminoimidazole-succinocarboxamide synthase"/>
    <property type="match status" value="1"/>
</dbReference>
<dbReference type="FunFam" id="3.30.470.20:FF:000015">
    <property type="entry name" value="Phosphoribosylaminoimidazole-succinocarboxamide synthase"/>
    <property type="match status" value="1"/>
</dbReference>
<dbReference type="Gene3D" id="3.30.470.20">
    <property type="entry name" value="ATP-grasp fold, B domain"/>
    <property type="match status" value="1"/>
</dbReference>
<dbReference type="Gene3D" id="3.30.200.20">
    <property type="entry name" value="Phosphorylase Kinase, domain 1"/>
    <property type="match status" value="1"/>
</dbReference>
<dbReference type="HAMAP" id="MF_00137">
    <property type="entry name" value="SAICAR_synth"/>
    <property type="match status" value="1"/>
</dbReference>
<dbReference type="InterPro" id="IPR028923">
    <property type="entry name" value="SAICAR_synt/ADE2_N"/>
</dbReference>
<dbReference type="InterPro" id="IPR018236">
    <property type="entry name" value="SAICAR_synthetase_CS"/>
</dbReference>
<dbReference type="NCBIfam" id="NF009251">
    <property type="entry name" value="PRK12607.1"/>
    <property type="match status" value="1"/>
</dbReference>
<dbReference type="PANTHER" id="PTHR43700">
    <property type="entry name" value="PHOSPHORIBOSYLAMINOIMIDAZOLE-SUCCINOCARBOXAMIDE SYNTHASE"/>
    <property type="match status" value="1"/>
</dbReference>
<dbReference type="PANTHER" id="PTHR43700:SF1">
    <property type="entry name" value="PHOSPHORIBOSYLAMINOIMIDAZOLE-SUCCINOCARBOXAMIDE SYNTHASE"/>
    <property type="match status" value="1"/>
</dbReference>
<dbReference type="Pfam" id="PF01259">
    <property type="entry name" value="SAICAR_synt"/>
    <property type="match status" value="1"/>
</dbReference>
<dbReference type="SUPFAM" id="SSF56104">
    <property type="entry name" value="SAICAR synthase-like"/>
    <property type="match status" value="1"/>
</dbReference>
<dbReference type="PROSITE" id="PS01057">
    <property type="entry name" value="SAICAR_SYNTHETASE_1"/>
    <property type="match status" value="1"/>
</dbReference>
<dbReference type="PROSITE" id="PS01058">
    <property type="entry name" value="SAICAR_SYNTHETASE_2"/>
    <property type="match status" value="1"/>
</dbReference>
<evidence type="ECO:0000255" key="1">
    <source>
        <dbReference type="HAMAP-Rule" id="MF_00137"/>
    </source>
</evidence>
<proteinExistence type="inferred from homology"/>
<feature type="chain" id="PRO_1000018720" description="Phosphoribosylaminoimidazole-succinocarboxamide synthase">
    <location>
        <begin position="1"/>
        <end position="312"/>
    </location>
</feature>
<accession>Q5X4M9</accession>
<sequence length="312" mass="35916">MPFCLTETSLPFGKKYKGKVRDTYDLGDQLILVTTDRQSAFDRCLAAVPYKGQVLNLTSVWWFKNTQSIVPNHLIAVPDPNVAIAKKCKIFPIEFVVRGYISGSTSTSLWTQYQKGVREYCGITFPDGLRKNQKLESPVITPTTKETLHDRPISPHEIVAEGWMTQEDWDETSSYALKLFQHGMEVAQQHGLILVDTKYEFGRDAEGRIVLVDEIHTPDSSRYWLFNGYQERFDAGKEPENIDKEFLRLWFVDHCDPYKDEVLPQAPQELIVTLASRYIQLYEMITGESFVYDSNPGPVNDRILHNIQRWLG</sequence>
<reference key="1">
    <citation type="journal article" date="2004" name="Nat. Genet.">
        <title>Evidence in the Legionella pneumophila genome for exploitation of host cell functions and high genome plasticity.</title>
        <authorList>
            <person name="Cazalet C."/>
            <person name="Rusniok C."/>
            <person name="Brueggemann H."/>
            <person name="Zidane N."/>
            <person name="Magnier A."/>
            <person name="Ma L."/>
            <person name="Tichit M."/>
            <person name="Jarraud S."/>
            <person name="Bouchier C."/>
            <person name="Vandenesch F."/>
            <person name="Kunst F."/>
            <person name="Etienne J."/>
            <person name="Glaser P."/>
            <person name="Buchrieser C."/>
        </authorList>
    </citation>
    <scope>NUCLEOTIDE SEQUENCE [LARGE SCALE GENOMIC DNA]</scope>
    <source>
        <strain>Paris</strain>
    </source>
</reference>
<comment type="catalytic activity">
    <reaction evidence="1">
        <text>5-amino-1-(5-phospho-D-ribosyl)imidazole-4-carboxylate + L-aspartate + ATP = (2S)-2-[5-amino-1-(5-phospho-beta-D-ribosyl)imidazole-4-carboxamido]succinate + ADP + phosphate + 2 H(+)</text>
        <dbReference type="Rhea" id="RHEA:22628"/>
        <dbReference type="ChEBI" id="CHEBI:15378"/>
        <dbReference type="ChEBI" id="CHEBI:29991"/>
        <dbReference type="ChEBI" id="CHEBI:30616"/>
        <dbReference type="ChEBI" id="CHEBI:43474"/>
        <dbReference type="ChEBI" id="CHEBI:58443"/>
        <dbReference type="ChEBI" id="CHEBI:77657"/>
        <dbReference type="ChEBI" id="CHEBI:456216"/>
        <dbReference type="EC" id="6.3.2.6"/>
    </reaction>
</comment>
<comment type="pathway">
    <text evidence="1">Purine metabolism; IMP biosynthesis via de novo pathway; 5-amino-1-(5-phospho-D-ribosyl)imidazole-4-carboxamide from 5-amino-1-(5-phospho-D-ribosyl)imidazole-4-carboxylate: step 1/2.</text>
</comment>
<comment type="similarity">
    <text evidence="1">Belongs to the SAICAR synthetase family.</text>
</comment>
<organism>
    <name type="scientific">Legionella pneumophila (strain Paris)</name>
    <dbReference type="NCBI Taxonomy" id="297246"/>
    <lineage>
        <taxon>Bacteria</taxon>
        <taxon>Pseudomonadati</taxon>
        <taxon>Pseudomonadota</taxon>
        <taxon>Gammaproteobacteria</taxon>
        <taxon>Legionellales</taxon>
        <taxon>Legionellaceae</taxon>
        <taxon>Legionella</taxon>
    </lineage>
</organism>
<keyword id="KW-0067">ATP-binding</keyword>
<keyword id="KW-0436">Ligase</keyword>
<keyword id="KW-0547">Nucleotide-binding</keyword>
<keyword id="KW-0658">Purine biosynthesis</keyword>
<name>PUR7_LEGPA</name>